<feature type="chain" id="PRO_1000126428" description="Small ribosomal subunit protein bS20">
    <location>
        <begin position="1"/>
        <end position="90"/>
    </location>
</feature>
<feature type="region of interest" description="Disordered" evidence="2">
    <location>
        <begin position="1"/>
        <end position="27"/>
    </location>
</feature>
<gene>
    <name evidence="1" type="primary">rpsT</name>
    <name type="ordered locus">CbuK_1671</name>
</gene>
<evidence type="ECO:0000255" key="1">
    <source>
        <dbReference type="HAMAP-Rule" id="MF_00500"/>
    </source>
</evidence>
<evidence type="ECO:0000256" key="2">
    <source>
        <dbReference type="SAM" id="MobiDB-lite"/>
    </source>
</evidence>
<evidence type="ECO:0000305" key="3"/>
<proteinExistence type="inferred from homology"/>
<comment type="function">
    <text evidence="1">Binds directly to 16S ribosomal RNA.</text>
</comment>
<comment type="similarity">
    <text evidence="1">Belongs to the bacterial ribosomal protein bS20 family.</text>
</comment>
<protein>
    <recommendedName>
        <fullName evidence="1">Small ribosomal subunit protein bS20</fullName>
    </recommendedName>
    <alternativeName>
        <fullName evidence="3">30S ribosomal protein S20</fullName>
    </alternativeName>
</protein>
<reference key="1">
    <citation type="journal article" date="2009" name="Infect. Immun.">
        <title>Comparative genomics reveal extensive transposon-mediated genomic plasticity and diversity among potential effector proteins within the genus Coxiella.</title>
        <authorList>
            <person name="Beare P.A."/>
            <person name="Unsworth N."/>
            <person name="Andoh M."/>
            <person name="Voth D.E."/>
            <person name="Omsland A."/>
            <person name="Gilk S.D."/>
            <person name="Williams K.P."/>
            <person name="Sobral B.W."/>
            <person name="Kupko J.J. III"/>
            <person name="Porcella S.F."/>
            <person name="Samuel J.E."/>
            <person name="Heinzen R.A."/>
        </authorList>
    </citation>
    <scope>NUCLEOTIDE SEQUENCE [LARGE SCALE GENOMIC DNA]</scope>
    <source>
        <strain>CbuK_Q154</strain>
    </source>
</reference>
<keyword id="KW-0687">Ribonucleoprotein</keyword>
<keyword id="KW-0689">Ribosomal protein</keyword>
<keyword id="KW-0694">RNA-binding</keyword>
<keyword id="KW-0699">rRNA-binding</keyword>
<accession>B6J9J9</accession>
<name>RS20_COXB1</name>
<organism>
    <name type="scientific">Coxiella burnetii (strain CbuK_Q154)</name>
    <name type="common">Coxiella burnetii (strain Q154)</name>
    <dbReference type="NCBI Taxonomy" id="434924"/>
    <lineage>
        <taxon>Bacteria</taxon>
        <taxon>Pseudomonadati</taxon>
        <taxon>Pseudomonadota</taxon>
        <taxon>Gammaproteobacteria</taxon>
        <taxon>Legionellales</taxon>
        <taxon>Coxiellaceae</taxon>
        <taxon>Coxiella</taxon>
    </lineage>
</organism>
<sequence>MANSAQAKKRARQNEKRELHNASQRSAVRTAVKKILKSLQANDSSAAQSAYQHAVQILDKAAGRRIIHPNKAARLKSRLSQKIKNLSSSQ</sequence>
<dbReference type="EMBL" id="CP001020">
    <property type="protein sequence ID" value="ACJ20813.1"/>
    <property type="molecule type" value="Genomic_DNA"/>
</dbReference>
<dbReference type="RefSeq" id="WP_005771970.1">
    <property type="nucleotide sequence ID" value="NC_011528.1"/>
</dbReference>
<dbReference type="SMR" id="B6J9J9"/>
<dbReference type="KEGG" id="cbc:CbuK_1671"/>
<dbReference type="HOGENOM" id="CLU_160655_4_0_6"/>
<dbReference type="GO" id="GO:0005829">
    <property type="term" value="C:cytosol"/>
    <property type="evidence" value="ECO:0007669"/>
    <property type="project" value="TreeGrafter"/>
</dbReference>
<dbReference type="GO" id="GO:0015935">
    <property type="term" value="C:small ribosomal subunit"/>
    <property type="evidence" value="ECO:0007669"/>
    <property type="project" value="TreeGrafter"/>
</dbReference>
<dbReference type="GO" id="GO:0070181">
    <property type="term" value="F:small ribosomal subunit rRNA binding"/>
    <property type="evidence" value="ECO:0007669"/>
    <property type="project" value="TreeGrafter"/>
</dbReference>
<dbReference type="GO" id="GO:0003735">
    <property type="term" value="F:structural constituent of ribosome"/>
    <property type="evidence" value="ECO:0007669"/>
    <property type="project" value="InterPro"/>
</dbReference>
<dbReference type="GO" id="GO:0006412">
    <property type="term" value="P:translation"/>
    <property type="evidence" value="ECO:0007669"/>
    <property type="project" value="UniProtKB-UniRule"/>
</dbReference>
<dbReference type="FunFam" id="1.20.58.110:FF:000001">
    <property type="entry name" value="30S ribosomal protein S20"/>
    <property type="match status" value="1"/>
</dbReference>
<dbReference type="Gene3D" id="1.20.58.110">
    <property type="entry name" value="Ribosomal protein S20"/>
    <property type="match status" value="1"/>
</dbReference>
<dbReference type="HAMAP" id="MF_00500">
    <property type="entry name" value="Ribosomal_bS20"/>
    <property type="match status" value="1"/>
</dbReference>
<dbReference type="InterPro" id="IPR002583">
    <property type="entry name" value="Ribosomal_bS20"/>
</dbReference>
<dbReference type="InterPro" id="IPR036510">
    <property type="entry name" value="Ribosomal_bS20_sf"/>
</dbReference>
<dbReference type="NCBIfam" id="TIGR00029">
    <property type="entry name" value="S20"/>
    <property type="match status" value="1"/>
</dbReference>
<dbReference type="PANTHER" id="PTHR33398">
    <property type="entry name" value="30S RIBOSOMAL PROTEIN S20"/>
    <property type="match status" value="1"/>
</dbReference>
<dbReference type="PANTHER" id="PTHR33398:SF1">
    <property type="entry name" value="SMALL RIBOSOMAL SUBUNIT PROTEIN BS20C"/>
    <property type="match status" value="1"/>
</dbReference>
<dbReference type="Pfam" id="PF01649">
    <property type="entry name" value="Ribosomal_S20p"/>
    <property type="match status" value="1"/>
</dbReference>
<dbReference type="SUPFAM" id="SSF46992">
    <property type="entry name" value="Ribosomal protein S20"/>
    <property type="match status" value="1"/>
</dbReference>